<name>LIPA_BORBR</name>
<dbReference type="EC" id="2.8.1.8" evidence="1"/>
<dbReference type="EMBL" id="BX640437">
    <property type="protein sequence ID" value="CAE30672.1"/>
    <property type="molecule type" value="Genomic_DNA"/>
</dbReference>
<dbReference type="RefSeq" id="WP_003807146.1">
    <property type="nucleotide sequence ID" value="NC_002927.3"/>
</dbReference>
<dbReference type="SMR" id="Q7WR00"/>
<dbReference type="GeneID" id="69603635"/>
<dbReference type="KEGG" id="bbr:BB0172"/>
<dbReference type="eggNOG" id="COG0320">
    <property type="taxonomic scope" value="Bacteria"/>
</dbReference>
<dbReference type="HOGENOM" id="CLU_033144_2_1_4"/>
<dbReference type="UniPathway" id="UPA00538">
    <property type="reaction ID" value="UER00593"/>
</dbReference>
<dbReference type="Proteomes" id="UP000001027">
    <property type="component" value="Chromosome"/>
</dbReference>
<dbReference type="GO" id="GO:0005737">
    <property type="term" value="C:cytoplasm"/>
    <property type="evidence" value="ECO:0007669"/>
    <property type="project" value="UniProtKB-SubCell"/>
</dbReference>
<dbReference type="GO" id="GO:0051539">
    <property type="term" value="F:4 iron, 4 sulfur cluster binding"/>
    <property type="evidence" value="ECO:0007669"/>
    <property type="project" value="UniProtKB-UniRule"/>
</dbReference>
<dbReference type="GO" id="GO:0016992">
    <property type="term" value="F:lipoate synthase activity"/>
    <property type="evidence" value="ECO:0007669"/>
    <property type="project" value="UniProtKB-UniRule"/>
</dbReference>
<dbReference type="GO" id="GO:0046872">
    <property type="term" value="F:metal ion binding"/>
    <property type="evidence" value="ECO:0007669"/>
    <property type="project" value="UniProtKB-KW"/>
</dbReference>
<dbReference type="CDD" id="cd01335">
    <property type="entry name" value="Radical_SAM"/>
    <property type="match status" value="1"/>
</dbReference>
<dbReference type="FunFam" id="3.20.20.70:FF:000040">
    <property type="entry name" value="Lipoyl synthase"/>
    <property type="match status" value="1"/>
</dbReference>
<dbReference type="Gene3D" id="3.20.20.70">
    <property type="entry name" value="Aldolase class I"/>
    <property type="match status" value="1"/>
</dbReference>
<dbReference type="HAMAP" id="MF_00206">
    <property type="entry name" value="Lipoyl_synth"/>
    <property type="match status" value="1"/>
</dbReference>
<dbReference type="InterPro" id="IPR013785">
    <property type="entry name" value="Aldolase_TIM"/>
</dbReference>
<dbReference type="InterPro" id="IPR006638">
    <property type="entry name" value="Elp3/MiaA/NifB-like_rSAM"/>
</dbReference>
<dbReference type="InterPro" id="IPR031691">
    <property type="entry name" value="LIAS_N"/>
</dbReference>
<dbReference type="InterPro" id="IPR003698">
    <property type="entry name" value="Lipoyl_synth"/>
</dbReference>
<dbReference type="InterPro" id="IPR007197">
    <property type="entry name" value="rSAM"/>
</dbReference>
<dbReference type="NCBIfam" id="TIGR00510">
    <property type="entry name" value="lipA"/>
    <property type="match status" value="1"/>
</dbReference>
<dbReference type="NCBIfam" id="NF004019">
    <property type="entry name" value="PRK05481.1"/>
    <property type="match status" value="1"/>
</dbReference>
<dbReference type="NCBIfam" id="NF009544">
    <property type="entry name" value="PRK12928.1"/>
    <property type="match status" value="1"/>
</dbReference>
<dbReference type="PANTHER" id="PTHR10949">
    <property type="entry name" value="LIPOYL SYNTHASE"/>
    <property type="match status" value="1"/>
</dbReference>
<dbReference type="PANTHER" id="PTHR10949:SF0">
    <property type="entry name" value="LIPOYL SYNTHASE, MITOCHONDRIAL"/>
    <property type="match status" value="1"/>
</dbReference>
<dbReference type="Pfam" id="PF16881">
    <property type="entry name" value="LIAS_N"/>
    <property type="match status" value="1"/>
</dbReference>
<dbReference type="Pfam" id="PF04055">
    <property type="entry name" value="Radical_SAM"/>
    <property type="match status" value="1"/>
</dbReference>
<dbReference type="PIRSF" id="PIRSF005963">
    <property type="entry name" value="Lipoyl_synth"/>
    <property type="match status" value="1"/>
</dbReference>
<dbReference type="SFLD" id="SFLDF00271">
    <property type="entry name" value="lipoyl_synthase"/>
    <property type="match status" value="1"/>
</dbReference>
<dbReference type="SFLD" id="SFLDS00029">
    <property type="entry name" value="Radical_SAM"/>
    <property type="match status" value="1"/>
</dbReference>
<dbReference type="SMART" id="SM00729">
    <property type="entry name" value="Elp3"/>
    <property type="match status" value="1"/>
</dbReference>
<dbReference type="SUPFAM" id="SSF102114">
    <property type="entry name" value="Radical SAM enzymes"/>
    <property type="match status" value="1"/>
</dbReference>
<dbReference type="PROSITE" id="PS51918">
    <property type="entry name" value="RADICAL_SAM"/>
    <property type="match status" value="1"/>
</dbReference>
<evidence type="ECO:0000255" key="1">
    <source>
        <dbReference type="HAMAP-Rule" id="MF_00206"/>
    </source>
</evidence>
<evidence type="ECO:0000255" key="2">
    <source>
        <dbReference type="PROSITE-ProRule" id="PRU01266"/>
    </source>
</evidence>
<evidence type="ECO:0000256" key="3">
    <source>
        <dbReference type="SAM" id="MobiDB-lite"/>
    </source>
</evidence>
<sequence>MSTLVESPVPSNDSQAAAPAAYDPTQKQKSQAKTARIPIKVVAAEKLKKPEWIRVRAAAPGSRFYDIKRILREHNLHTVCEEASCPNIGECFGKGTATFMIMGDKCTRRCPFCDVGHGRPDPLDTQEPENLARTIAALKLSYVVITSVDRDDLRDGGAAHFVECIAKVREYSPDTRIEVLVPDFRGRLDRALHILNSGPPDVMNHNLETVPRLYKQARPGSDYAHSLKLLAEFKKLHPEVPTKSGLMLGLGETDEEILQVMRDMREHNVDMLTIGQYLQPSEHHLPVLRYVHPDTFAMFEREAYAMGFTHAAVGAMVRSSYHADQQAHAAGVN</sequence>
<keyword id="KW-0004">4Fe-4S</keyword>
<keyword id="KW-0963">Cytoplasm</keyword>
<keyword id="KW-0408">Iron</keyword>
<keyword id="KW-0411">Iron-sulfur</keyword>
<keyword id="KW-0479">Metal-binding</keyword>
<keyword id="KW-0949">S-adenosyl-L-methionine</keyword>
<keyword id="KW-0808">Transferase</keyword>
<organism>
    <name type="scientific">Bordetella bronchiseptica (strain ATCC BAA-588 / NCTC 13252 / RB50)</name>
    <name type="common">Alcaligenes bronchisepticus</name>
    <dbReference type="NCBI Taxonomy" id="257310"/>
    <lineage>
        <taxon>Bacteria</taxon>
        <taxon>Pseudomonadati</taxon>
        <taxon>Pseudomonadota</taxon>
        <taxon>Betaproteobacteria</taxon>
        <taxon>Burkholderiales</taxon>
        <taxon>Alcaligenaceae</taxon>
        <taxon>Bordetella</taxon>
    </lineage>
</organism>
<gene>
    <name evidence="1" type="primary">lipA</name>
    <name type="ordered locus">BB0172</name>
</gene>
<accession>Q7WR00</accession>
<protein>
    <recommendedName>
        <fullName evidence="1">Lipoyl synthase</fullName>
        <ecNumber evidence="1">2.8.1.8</ecNumber>
    </recommendedName>
    <alternativeName>
        <fullName evidence="1">Lip-syn</fullName>
        <shortName evidence="1">LS</shortName>
    </alternativeName>
    <alternativeName>
        <fullName evidence="1">Lipoate synthase</fullName>
    </alternativeName>
    <alternativeName>
        <fullName evidence="1">Lipoic acid synthase</fullName>
    </alternativeName>
    <alternativeName>
        <fullName evidence="1">Sulfur insertion protein LipA</fullName>
    </alternativeName>
</protein>
<proteinExistence type="inferred from homology"/>
<comment type="function">
    <text evidence="1">Catalyzes the radical-mediated insertion of two sulfur atoms into the C-6 and C-8 positions of the octanoyl moiety bound to the lipoyl domains of lipoate-dependent enzymes, thereby converting the octanoylated domains into lipoylated derivatives.</text>
</comment>
<comment type="catalytic activity">
    <reaction evidence="1">
        <text>[[Fe-S] cluster scaffold protein carrying a second [4Fe-4S](2+) cluster] + N(6)-octanoyl-L-lysyl-[protein] + 2 oxidized [2Fe-2S]-[ferredoxin] + 2 S-adenosyl-L-methionine + 4 H(+) = [[Fe-S] cluster scaffold protein] + N(6)-[(R)-dihydrolipoyl]-L-lysyl-[protein] + 4 Fe(3+) + 2 hydrogen sulfide + 2 5'-deoxyadenosine + 2 L-methionine + 2 reduced [2Fe-2S]-[ferredoxin]</text>
        <dbReference type="Rhea" id="RHEA:16585"/>
        <dbReference type="Rhea" id="RHEA-COMP:9928"/>
        <dbReference type="Rhea" id="RHEA-COMP:10000"/>
        <dbReference type="Rhea" id="RHEA-COMP:10001"/>
        <dbReference type="Rhea" id="RHEA-COMP:10475"/>
        <dbReference type="Rhea" id="RHEA-COMP:14568"/>
        <dbReference type="Rhea" id="RHEA-COMP:14569"/>
        <dbReference type="ChEBI" id="CHEBI:15378"/>
        <dbReference type="ChEBI" id="CHEBI:17319"/>
        <dbReference type="ChEBI" id="CHEBI:29034"/>
        <dbReference type="ChEBI" id="CHEBI:29919"/>
        <dbReference type="ChEBI" id="CHEBI:33722"/>
        <dbReference type="ChEBI" id="CHEBI:33737"/>
        <dbReference type="ChEBI" id="CHEBI:33738"/>
        <dbReference type="ChEBI" id="CHEBI:57844"/>
        <dbReference type="ChEBI" id="CHEBI:59789"/>
        <dbReference type="ChEBI" id="CHEBI:78809"/>
        <dbReference type="ChEBI" id="CHEBI:83100"/>
        <dbReference type="EC" id="2.8.1.8"/>
    </reaction>
</comment>
<comment type="cofactor">
    <cofactor evidence="1">
        <name>[4Fe-4S] cluster</name>
        <dbReference type="ChEBI" id="CHEBI:49883"/>
    </cofactor>
    <text evidence="1">Binds 2 [4Fe-4S] clusters per subunit. One cluster is coordinated with 3 cysteines and an exchangeable S-adenosyl-L-methionine.</text>
</comment>
<comment type="pathway">
    <text evidence="1">Protein modification; protein lipoylation via endogenous pathway; protein N(6)-(lipoyl)lysine from octanoyl-[acyl-carrier-protein]: step 2/2.</text>
</comment>
<comment type="subcellular location">
    <subcellularLocation>
        <location evidence="1">Cytoplasm</location>
    </subcellularLocation>
</comment>
<comment type="similarity">
    <text evidence="1">Belongs to the radical SAM superfamily. Lipoyl synthase family.</text>
</comment>
<reference key="1">
    <citation type="journal article" date="2003" name="Nat. Genet.">
        <title>Comparative analysis of the genome sequences of Bordetella pertussis, Bordetella parapertussis and Bordetella bronchiseptica.</title>
        <authorList>
            <person name="Parkhill J."/>
            <person name="Sebaihia M."/>
            <person name="Preston A."/>
            <person name="Murphy L.D."/>
            <person name="Thomson N.R."/>
            <person name="Harris D.E."/>
            <person name="Holden M.T.G."/>
            <person name="Churcher C.M."/>
            <person name="Bentley S.D."/>
            <person name="Mungall K.L."/>
            <person name="Cerdeno-Tarraga A.-M."/>
            <person name="Temple L."/>
            <person name="James K.D."/>
            <person name="Harris B."/>
            <person name="Quail M.A."/>
            <person name="Achtman M."/>
            <person name="Atkin R."/>
            <person name="Baker S."/>
            <person name="Basham D."/>
            <person name="Bason N."/>
            <person name="Cherevach I."/>
            <person name="Chillingworth T."/>
            <person name="Collins M."/>
            <person name="Cronin A."/>
            <person name="Davis P."/>
            <person name="Doggett J."/>
            <person name="Feltwell T."/>
            <person name="Goble A."/>
            <person name="Hamlin N."/>
            <person name="Hauser H."/>
            <person name="Holroyd S."/>
            <person name="Jagels K."/>
            <person name="Leather S."/>
            <person name="Moule S."/>
            <person name="Norberczak H."/>
            <person name="O'Neil S."/>
            <person name="Ormond D."/>
            <person name="Price C."/>
            <person name="Rabbinowitsch E."/>
            <person name="Rutter S."/>
            <person name="Sanders M."/>
            <person name="Saunders D."/>
            <person name="Seeger K."/>
            <person name="Sharp S."/>
            <person name="Simmonds M."/>
            <person name="Skelton J."/>
            <person name="Squares R."/>
            <person name="Squares S."/>
            <person name="Stevens K."/>
            <person name="Unwin L."/>
            <person name="Whitehead S."/>
            <person name="Barrell B.G."/>
            <person name="Maskell D.J."/>
        </authorList>
    </citation>
    <scope>NUCLEOTIDE SEQUENCE [LARGE SCALE GENOMIC DNA]</scope>
    <source>
        <strain>ATCC BAA-588 / NCTC 13252 / RB50</strain>
    </source>
</reference>
<feature type="chain" id="PRO_0000102290" description="Lipoyl synthase">
    <location>
        <begin position="1"/>
        <end position="333"/>
    </location>
</feature>
<feature type="domain" description="Radical SAM core" evidence="2">
    <location>
        <begin position="91"/>
        <end position="309"/>
    </location>
</feature>
<feature type="region of interest" description="Disordered" evidence="3">
    <location>
        <begin position="1"/>
        <end position="34"/>
    </location>
</feature>
<feature type="compositionally biased region" description="Polar residues" evidence="3">
    <location>
        <begin position="1"/>
        <end position="15"/>
    </location>
</feature>
<feature type="binding site" evidence="1">
    <location>
        <position position="80"/>
    </location>
    <ligand>
        <name>[4Fe-4S] cluster</name>
        <dbReference type="ChEBI" id="CHEBI:49883"/>
        <label>1</label>
    </ligand>
</feature>
<feature type="binding site" evidence="1">
    <location>
        <position position="85"/>
    </location>
    <ligand>
        <name>[4Fe-4S] cluster</name>
        <dbReference type="ChEBI" id="CHEBI:49883"/>
        <label>1</label>
    </ligand>
</feature>
<feature type="binding site" evidence="1">
    <location>
        <position position="91"/>
    </location>
    <ligand>
        <name>[4Fe-4S] cluster</name>
        <dbReference type="ChEBI" id="CHEBI:49883"/>
        <label>1</label>
    </ligand>
</feature>
<feature type="binding site" evidence="1">
    <location>
        <position position="106"/>
    </location>
    <ligand>
        <name>[4Fe-4S] cluster</name>
        <dbReference type="ChEBI" id="CHEBI:49883"/>
        <label>2</label>
        <note>4Fe-4S-S-AdoMet</note>
    </ligand>
</feature>
<feature type="binding site" evidence="1">
    <location>
        <position position="110"/>
    </location>
    <ligand>
        <name>[4Fe-4S] cluster</name>
        <dbReference type="ChEBI" id="CHEBI:49883"/>
        <label>2</label>
        <note>4Fe-4S-S-AdoMet</note>
    </ligand>
</feature>
<feature type="binding site" evidence="1">
    <location>
        <position position="113"/>
    </location>
    <ligand>
        <name>[4Fe-4S] cluster</name>
        <dbReference type="ChEBI" id="CHEBI:49883"/>
        <label>2</label>
        <note>4Fe-4S-S-AdoMet</note>
    </ligand>
</feature>
<feature type="binding site" evidence="1">
    <location>
        <position position="320"/>
    </location>
    <ligand>
        <name>[4Fe-4S] cluster</name>
        <dbReference type="ChEBI" id="CHEBI:49883"/>
        <label>1</label>
    </ligand>
</feature>